<feature type="chain" id="PRO_0000120275" description="Probable Brix domain-containing ribosomal biogenesis protein">
    <location>
        <begin position="1"/>
        <end position="224"/>
    </location>
</feature>
<feature type="domain" description="Brix" evidence="1">
    <location>
        <begin position="1"/>
        <end position="196"/>
    </location>
</feature>
<gene>
    <name type="ordered locus">PYRAB02740</name>
    <name type="ORF">PAB2357</name>
</gene>
<dbReference type="EMBL" id="AJ248283">
    <property type="protein sequence ID" value="CAB49198.1"/>
    <property type="molecule type" value="Genomic_DNA"/>
</dbReference>
<dbReference type="EMBL" id="HE613800">
    <property type="protein sequence ID" value="CCE69651.1"/>
    <property type="molecule type" value="Genomic_DNA"/>
</dbReference>
<dbReference type="PIR" id="G75218">
    <property type="entry name" value="G75218"/>
</dbReference>
<dbReference type="RefSeq" id="WP_010867398.1">
    <property type="nucleotide sequence ID" value="NC_000868.1"/>
</dbReference>
<dbReference type="SMR" id="Q9V200"/>
<dbReference type="STRING" id="272844.PAB2357"/>
<dbReference type="KEGG" id="pab:PAB2357"/>
<dbReference type="PATRIC" id="fig|272844.11.peg.294"/>
<dbReference type="eggNOG" id="arCOG03247">
    <property type="taxonomic scope" value="Archaea"/>
</dbReference>
<dbReference type="HOGENOM" id="CLU_107897_0_0_2"/>
<dbReference type="OrthoDB" id="117530at2157"/>
<dbReference type="PhylomeDB" id="Q9V200"/>
<dbReference type="Proteomes" id="UP000000810">
    <property type="component" value="Chromosome"/>
</dbReference>
<dbReference type="Proteomes" id="UP000009139">
    <property type="component" value="Chromosome"/>
</dbReference>
<dbReference type="GO" id="GO:0042134">
    <property type="term" value="F:rRNA primary transcript binding"/>
    <property type="evidence" value="ECO:0007669"/>
    <property type="project" value="InterPro"/>
</dbReference>
<dbReference type="GO" id="GO:0006364">
    <property type="term" value="P:rRNA processing"/>
    <property type="evidence" value="ECO:0007669"/>
    <property type="project" value="InterPro"/>
</dbReference>
<dbReference type="Gene3D" id="3.40.50.10480">
    <property type="entry name" value="Probable brix-domain ribosomal biogenesis protein"/>
    <property type="match status" value="1"/>
</dbReference>
<dbReference type="HAMAP" id="MF_00699">
    <property type="entry name" value="BriX"/>
    <property type="match status" value="1"/>
</dbReference>
<dbReference type="InterPro" id="IPR007109">
    <property type="entry name" value="Brix"/>
</dbReference>
<dbReference type="InterPro" id="IPR023548">
    <property type="entry name" value="Brix_dom_Rbsml_bgen_prot"/>
</dbReference>
<dbReference type="InterPro" id="IPR044281">
    <property type="entry name" value="IMP4/RPF1"/>
</dbReference>
<dbReference type="NCBIfam" id="NF003053">
    <property type="entry name" value="PRK03972.1"/>
    <property type="match status" value="1"/>
</dbReference>
<dbReference type="PANTHER" id="PTHR22734">
    <property type="entry name" value="U3 SMALL NUCLEOLAR RIBONUCLEOPROTEIN PROTEIN IMP4"/>
    <property type="match status" value="1"/>
</dbReference>
<dbReference type="SMART" id="SM00879">
    <property type="entry name" value="Brix"/>
    <property type="match status" value="1"/>
</dbReference>
<dbReference type="SUPFAM" id="SSF52954">
    <property type="entry name" value="Class II aaRS ABD-related"/>
    <property type="match status" value="1"/>
</dbReference>
<dbReference type="PROSITE" id="PS50833">
    <property type="entry name" value="BRIX"/>
    <property type="match status" value="1"/>
</dbReference>
<evidence type="ECO:0000255" key="1">
    <source>
        <dbReference type="HAMAP-Rule" id="MF_00699"/>
    </source>
</evidence>
<accession>Q9V200</accession>
<accession>G8ZHQ8</accession>
<comment type="function">
    <text evidence="1">Probably involved in the biogenesis of the ribosome.</text>
</comment>
<proteinExistence type="inferred from homology"/>
<protein>
    <recommendedName>
        <fullName evidence="1">Probable Brix domain-containing ribosomal biogenesis protein</fullName>
    </recommendedName>
</protein>
<organism>
    <name type="scientific">Pyrococcus abyssi (strain GE5 / Orsay)</name>
    <dbReference type="NCBI Taxonomy" id="272844"/>
    <lineage>
        <taxon>Archaea</taxon>
        <taxon>Methanobacteriati</taxon>
        <taxon>Methanobacteriota</taxon>
        <taxon>Thermococci</taxon>
        <taxon>Thermococcales</taxon>
        <taxon>Thermococcaceae</taxon>
        <taxon>Pyrococcus</taxon>
    </lineage>
</organism>
<keyword id="KW-0690">Ribosome biogenesis</keyword>
<sequence>MMLITTSHRPTRRTRSFGHDLERVFPNSLYMTRGKKTIQELLMEAYDRGYERLLIINVWKGNPLKMTFIKVHPDDWGYLGYLYLHGVKLQREMGFRGLNPIREDMPLVVTTAKRVGLDHLAFAQVFSELTTGKFVPRGDKSLLSIADKYNTDVLAVIERHPRGIVVNFYRLDVTKERAVGPLINVKIWIMEDGRRWDYKEAFGIKVKPRRKEGEAEEGARKDSH</sequence>
<reference key="1">
    <citation type="journal article" date="2003" name="Mol. Microbiol.">
        <title>An integrated analysis of the genome of the hyperthermophilic archaeon Pyrococcus abyssi.</title>
        <authorList>
            <person name="Cohen G.N."/>
            <person name="Barbe V."/>
            <person name="Flament D."/>
            <person name="Galperin M."/>
            <person name="Heilig R."/>
            <person name="Lecompte O."/>
            <person name="Poch O."/>
            <person name="Prieur D."/>
            <person name="Querellou J."/>
            <person name="Ripp R."/>
            <person name="Thierry J.-C."/>
            <person name="Van der Oost J."/>
            <person name="Weissenbach J."/>
            <person name="Zivanovic Y."/>
            <person name="Forterre P."/>
        </authorList>
    </citation>
    <scope>NUCLEOTIDE SEQUENCE [LARGE SCALE GENOMIC DNA]</scope>
    <source>
        <strain>GE5 / Orsay</strain>
    </source>
</reference>
<reference key="2">
    <citation type="journal article" date="2012" name="Curr. Microbiol.">
        <title>Re-annotation of two hyperthermophilic archaea Pyrococcus abyssi GE5 and Pyrococcus furiosus DSM 3638.</title>
        <authorList>
            <person name="Gao J."/>
            <person name="Wang J."/>
        </authorList>
    </citation>
    <scope>GENOME REANNOTATION</scope>
    <source>
        <strain>GE5 / Orsay</strain>
    </source>
</reference>
<name>BRIX_PYRAB</name>